<gene>
    <name type="ordered locus">Shew185_1898</name>
</gene>
<comment type="similarity">
    <text evidence="1">Belongs to the UPF0260 family.</text>
</comment>
<dbReference type="EMBL" id="CP000753">
    <property type="protein sequence ID" value="ABS08041.1"/>
    <property type="molecule type" value="Genomic_DNA"/>
</dbReference>
<dbReference type="RefSeq" id="WP_006081366.1">
    <property type="nucleotide sequence ID" value="NC_009665.1"/>
</dbReference>
<dbReference type="GeneID" id="11772110"/>
<dbReference type="KEGG" id="sbm:Shew185_1898"/>
<dbReference type="HOGENOM" id="CLU_109769_0_1_6"/>
<dbReference type="HAMAP" id="MF_00676">
    <property type="entry name" value="UPF0260"/>
    <property type="match status" value="1"/>
</dbReference>
<dbReference type="InterPro" id="IPR005358">
    <property type="entry name" value="Puta_zinc/iron-chelating_dom"/>
</dbReference>
<dbReference type="InterPro" id="IPR008228">
    <property type="entry name" value="UCP006173"/>
</dbReference>
<dbReference type="NCBIfam" id="NF003500">
    <property type="entry name" value="PRK05170.1-4"/>
    <property type="match status" value="1"/>
</dbReference>
<dbReference type="NCBIfam" id="NF003501">
    <property type="entry name" value="PRK05170.1-5"/>
    <property type="match status" value="1"/>
</dbReference>
<dbReference type="NCBIfam" id="NF003507">
    <property type="entry name" value="PRK05170.2-5"/>
    <property type="match status" value="1"/>
</dbReference>
<dbReference type="PANTHER" id="PTHR37421">
    <property type="entry name" value="UPF0260 PROTEIN YCGN"/>
    <property type="match status" value="1"/>
</dbReference>
<dbReference type="PANTHER" id="PTHR37421:SF1">
    <property type="entry name" value="UPF0260 PROTEIN YCGN"/>
    <property type="match status" value="1"/>
</dbReference>
<dbReference type="Pfam" id="PF03692">
    <property type="entry name" value="CxxCxxCC"/>
    <property type="match status" value="1"/>
</dbReference>
<dbReference type="PIRSF" id="PIRSF006173">
    <property type="entry name" value="UCP006173"/>
    <property type="match status" value="1"/>
</dbReference>
<proteinExistence type="inferred from homology"/>
<name>Y1898_SHEB8</name>
<sequence>MAFWQSKTLAQMSATEWESLCDGCGKCCLNKLIDDETEDLYYTNAACLLLDHQTAGCQHYSDRFTHVPQCTVITIDNIHELTWLPDSCAYRRLAAGRELPSWHPLLTGSKEAMHLAGMSIQGKVVDERRVKDIEDHIVLWPLKDVD</sequence>
<organism>
    <name type="scientific">Shewanella baltica (strain OS185)</name>
    <dbReference type="NCBI Taxonomy" id="402882"/>
    <lineage>
        <taxon>Bacteria</taxon>
        <taxon>Pseudomonadati</taxon>
        <taxon>Pseudomonadota</taxon>
        <taxon>Gammaproteobacteria</taxon>
        <taxon>Alteromonadales</taxon>
        <taxon>Shewanellaceae</taxon>
        <taxon>Shewanella</taxon>
    </lineage>
</organism>
<feature type="chain" id="PRO_1000044811" description="UPF0260 protein Shew185_1898">
    <location>
        <begin position="1"/>
        <end position="146"/>
    </location>
</feature>
<protein>
    <recommendedName>
        <fullName evidence="1">UPF0260 protein Shew185_1898</fullName>
    </recommendedName>
</protein>
<accession>A6WMK2</accession>
<evidence type="ECO:0000255" key="1">
    <source>
        <dbReference type="HAMAP-Rule" id="MF_00676"/>
    </source>
</evidence>
<reference key="1">
    <citation type="submission" date="2007-07" db="EMBL/GenBank/DDBJ databases">
        <title>Complete sequence of chromosome of Shewanella baltica OS185.</title>
        <authorList>
            <consortium name="US DOE Joint Genome Institute"/>
            <person name="Copeland A."/>
            <person name="Lucas S."/>
            <person name="Lapidus A."/>
            <person name="Barry K."/>
            <person name="Glavina del Rio T."/>
            <person name="Dalin E."/>
            <person name="Tice H."/>
            <person name="Pitluck S."/>
            <person name="Sims D."/>
            <person name="Brettin T."/>
            <person name="Bruce D."/>
            <person name="Detter J.C."/>
            <person name="Han C."/>
            <person name="Schmutz J."/>
            <person name="Larimer F."/>
            <person name="Land M."/>
            <person name="Hauser L."/>
            <person name="Kyrpides N."/>
            <person name="Mikhailova N."/>
            <person name="Brettar I."/>
            <person name="Rodrigues J."/>
            <person name="Konstantinidis K."/>
            <person name="Tiedje J."/>
            <person name="Richardson P."/>
        </authorList>
    </citation>
    <scope>NUCLEOTIDE SEQUENCE [LARGE SCALE GENOMIC DNA]</scope>
    <source>
        <strain>OS185</strain>
    </source>
</reference>